<sequence length="372" mass="40456">MNTGIDLQGSFIESLKQLGLPDGVAKALWIPLPSFLMIIGATVGVLVVVWLERKISAAAQQRIGPEYAGPLGVLQPVADGIKLVFKEDIIPAKADPWLFTLGPVLVVLPVFVSYLIVPFGQNLVITDLNVGIFLWISLSSIAPIGLLMSGYASNNKYSLLGGLRAAAQSISYEIPLAFSVLAIAMMSNSLSTIDIVQQQSGYGILGWNVWRQPVGLIIFWIAALAECERLPFDLPEAEEEIVAGYQTEYSGMKFGLFYVGSYVNLVLSALVFAILYLGGWEFPVPLDKLAGWLGVNDNSPWLQVITASLGITMTVLKAYFLVFIAVLLRWTVPRVRIDQLLNLGWKFLLPVSLVNLLLTAALKLAFPVAFGG</sequence>
<keyword id="KW-0472">Membrane</keyword>
<keyword id="KW-0520">NAD</keyword>
<keyword id="KW-0521">NADP</keyword>
<keyword id="KW-0618">Plastoquinone</keyword>
<keyword id="KW-0874">Quinone</keyword>
<keyword id="KW-1185">Reference proteome</keyword>
<keyword id="KW-0793">Thylakoid</keyword>
<keyword id="KW-1278">Translocase</keyword>
<keyword id="KW-0812">Transmembrane</keyword>
<keyword id="KW-1133">Transmembrane helix</keyword>
<comment type="function">
    <text evidence="1">NDH-1 shuttles electrons from an unknown electron donor, via FMN and iron-sulfur (Fe-S) centers, to quinones in the respiratory and/or the photosynthetic chain. The immediate electron acceptor for the enzyme in this species is believed to be plastoquinone. Couples the redox reaction to proton translocation, and thus conserves the redox energy in a proton gradient.</text>
</comment>
<comment type="catalytic activity">
    <reaction evidence="1">
        <text>a plastoquinone + NADH + (n+1) H(+)(in) = a plastoquinol + NAD(+) + n H(+)(out)</text>
        <dbReference type="Rhea" id="RHEA:42608"/>
        <dbReference type="Rhea" id="RHEA-COMP:9561"/>
        <dbReference type="Rhea" id="RHEA-COMP:9562"/>
        <dbReference type="ChEBI" id="CHEBI:15378"/>
        <dbReference type="ChEBI" id="CHEBI:17757"/>
        <dbReference type="ChEBI" id="CHEBI:57540"/>
        <dbReference type="ChEBI" id="CHEBI:57945"/>
        <dbReference type="ChEBI" id="CHEBI:62192"/>
    </reaction>
</comment>
<comment type="catalytic activity">
    <reaction evidence="1">
        <text>a plastoquinone + NADPH + (n+1) H(+)(in) = a plastoquinol + NADP(+) + n H(+)(out)</text>
        <dbReference type="Rhea" id="RHEA:42612"/>
        <dbReference type="Rhea" id="RHEA-COMP:9561"/>
        <dbReference type="Rhea" id="RHEA-COMP:9562"/>
        <dbReference type="ChEBI" id="CHEBI:15378"/>
        <dbReference type="ChEBI" id="CHEBI:17757"/>
        <dbReference type="ChEBI" id="CHEBI:57783"/>
        <dbReference type="ChEBI" id="CHEBI:58349"/>
        <dbReference type="ChEBI" id="CHEBI:62192"/>
    </reaction>
</comment>
<comment type="subunit">
    <text evidence="1">NDH-1 is composed of at least 11 different subunits.</text>
</comment>
<comment type="subcellular location">
    <subcellularLocation>
        <location evidence="1">Cellular thylakoid membrane</location>
        <topology evidence="1">Multi-pass membrane protein</topology>
    </subcellularLocation>
</comment>
<comment type="similarity">
    <text evidence="1">Belongs to the complex I subunit 1 family.</text>
</comment>
<evidence type="ECO:0000255" key="1">
    <source>
        <dbReference type="HAMAP-Rule" id="MF_01350"/>
    </source>
</evidence>
<protein>
    <recommendedName>
        <fullName evidence="1">NAD(P)H-quinone oxidoreductase subunit 1</fullName>
        <ecNumber evidence="1">7.1.1.-</ecNumber>
    </recommendedName>
    <alternativeName>
        <fullName evidence="1">NAD(P)H dehydrogenase I subunit 1</fullName>
    </alternativeName>
    <alternativeName>
        <fullName evidence="1">NDH-1 subunit 1</fullName>
    </alternativeName>
    <alternativeName>
        <fullName evidence="1">NDH-A</fullName>
    </alternativeName>
</protein>
<reference key="1">
    <citation type="journal article" date="2011" name="MBio">
        <title>Novel metabolic attributes of the genus Cyanothece, comprising a group of unicellular nitrogen-fixing Cyanobacteria.</title>
        <authorList>
            <person name="Bandyopadhyay A."/>
            <person name="Elvitigala T."/>
            <person name="Welsh E."/>
            <person name="Stockel J."/>
            <person name="Liberton M."/>
            <person name="Min H."/>
            <person name="Sherman L.A."/>
            <person name="Pakrasi H.B."/>
        </authorList>
    </citation>
    <scope>NUCLEOTIDE SEQUENCE [LARGE SCALE GENOMIC DNA]</scope>
    <source>
        <strain>PCC 8801 / RF-1</strain>
    </source>
</reference>
<name>NU1C_RIPO1</name>
<dbReference type="EC" id="7.1.1.-" evidence="1"/>
<dbReference type="EMBL" id="CP001287">
    <property type="protein sequence ID" value="ACK65086.1"/>
    <property type="molecule type" value="Genomic_DNA"/>
</dbReference>
<dbReference type="RefSeq" id="WP_012594361.1">
    <property type="nucleotide sequence ID" value="NC_011726.1"/>
</dbReference>
<dbReference type="SMR" id="B7K0U5"/>
<dbReference type="STRING" id="41431.PCC8801_1010"/>
<dbReference type="KEGG" id="cyp:PCC8801_1010"/>
<dbReference type="eggNOG" id="COG1005">
    <property type="taxonomic scope" value="Bacteria"/>
</dbReference>
<dbReference type="HOGENOM" id="CLU_015134_0_1_3"/>
<dbReference type="OrthoDB" id="9803734at2"/>
<dbReference type="Proteomes" id="UP000008204">
    <property type="component" value="Chromosome"/>
</dbReference>
<dbReference type="GO" id="GO:0031676">
    <property type="term" value="C:plasma membrane-derived thylakoid membrane"/>
    <property type="evidence" value="ECO:0007669"/>
    <property type="project" value="UniProtKB-SubCell"/>
</dbReference>
<dbReference type="GO" id="GO:0003954">
    <property type="term" value="F:NADH dehydrogenase activity"/>
    <property type="evidence" value="ECO:0007669"/>
    <property type="project" value="TreeGrafter"/>
</dbReference>
<dbReference type="GO" id="GO:0016655">
    <property type="term" value="F:oxidoreductase activity, acting on NAD(P)H, quinone or similar compound as acceptor"/>
    <property type="evidence" value="ECO:0007669"/>
    <property type="project" value="UniProtKB-UniRule"/>
</dbReference>
<dbReference type="GO" id="GO:0048038">
    <property type="term" value="F:quinone binding"/>
    <property type="evidence" value="ECO:0007669"/>
    <property type="project" value="UniProtKB-KW"/>
</dbReference>
<dbReference type="GO" id="GO:0009060">
    <property type="term" value="P:aerobic respiration"/>
    <property type="evidence" value="ECO:0007669"/>
    <property type="project" value="TreeGrafter"/>
</dbReference>
<dbReference type="GO" id="GO:0019684">
    <property type="term" value="P:photosynthesis, light reaction"/>
    <property type="evidence" value="ECO:0007669"/>
    <property type="project" value="UniProtKB-UniRule"/>
</dbReference>
<dbReference type="HAMAP" id="MF_01350">
    <property type="entry name" value="NDH1_NuoH"/>
    <property type="match status" value="1"/>
</dbReference>
<dbReference type="InterPro" id="IPR001694">
    <property type="entry name" value="NADH_UbQ_OxRdtase_su1/FPO"/>
</dbReference>
<dbReference type="InterPro" id="IPR018086">
    <property type="entry name" value="NADH_UbQ_OxRdtase_su1_CS"/>
</dbReference>
<dbReference type="NCBIfam" id="NF004741">
    <property type="entry name" value="PRK06076.1-2"/>
    <property type="match status" value="1"/>
</dbReference>
<dbReference type="NCBIfam" id="NF004744">
    <property type="entry name" value="PRK06076.1-5"/>
    <property type="match status" value="1"/>
</dbReference>
<dbReference type="PANTHER" id="PTHR11432">
    <property type="entry name" value="NADH DEHYDROGENASE SUBUNIT 1"/>
    <property type="match status" value="1"/>
</dbReference>
<dbReference type="PANTHER" id="PTHR11432:SF3">
    <property type="entry name" value="NADH-UBIQUINONE OXIDOREDUCTASE CHAIN 1"/>
    <property type="match status" value="1"/>
</dbReference>
<dbReference type="Pfam" id="PF00146">
    <property type="entry name" value="NADHdh"/>
    <property type="match status" value="1"/>
</dbReference>
<dbReference type="PROSITE" id="PS00667">
    <property type="entry name" value="COMPLEX1_ND1_1"/>
    <property type="match status" value="1"/>
</dbReference>
<dbReference type="PROSITE" id="PS00668">
    <property type="entry name" value="COMPLEX1_ND1_2"/>
    <property type="match status" value="1"/>
</dbReference>
<accession>B7K0U5</accession>
<organism>
    <name type="scientific">Rippkaea orientalis (strain PCC 8801 / RF-1)</name>
    <name type="common">Cyanothece sp. (strain PCC 8801)</name>
    <dbReference type="NCBI Taxonomy" id="41431"/>
    <lineage>
        <taxon>Bacteria</taxon>
        <taxon>Bacillati</taxon>
        <taxon>Cyanobacteriota</taxon>
        <taxon>Cyanophyceae</taxon>
        <taxon>Oscillatoriophycideae</taxon>
        <taxon>Chroococcales</taxon>
        <taxon>Aphanothecaceae</taxon>
        <taxon>Rippkaea</taxon>
        <taxon>Rippkaea orientalis</taxon>
    </lineage>
</organism>
<proteinExistence type="inferred from homology"/>
<gene>
    <name evidence="1" type="primary">ndhA</name>
    <name type="ordered locus">PCC8801_1010</name>
</gene>
<feature type="chain" id="PRO_1000143589" description="NAD(P)H-quinone oxidoreductase subunit 1">
    <location>
        <begin position="1"/>
        <end position="372"/>
    </location>
</feature>
<feature type="transmembrane region" description="Helical" evidence="1">
    <location>
        <begin position="29"/>
        <end position="49"/>
    </location>
</feature>
<feature type="transmembrane region" description="Helical" evidence="1">
    <location>
        <begin position="97"/>
        <end position="117"/>
    </location>
</feature>
<feature type="transmembrane region" description="Helical" evidence="1">
    <location>
        <begin position="130"/>
        <end position="150"/>
    </location>
</feature>
<feature type="transmembrane region" description="Helical" evidence="1">
    <location>
        <begin position="176"/>
        <end position="196"/>
    </location>
</feature>
<feature type="transmembrane region" description="Helical" evidence="1">
    <location>
        <begin position="204"/>
        <end position="224"/>
    </location>
</feature>
<feature type="transmembrane region" description="Helical" evidence="1">
    <location>
        <begin position="254"/>
        <end position="274"/>
    </location>
</feature>
<feature type="transmembrane region" description="Helical" evidence="1">
    <location>
        <begin position="308"/>
        <end position="328"/>
    </location>
</feature>
<feature type="transmembrane region" description="Helical" evidence="1">
    <location>
        <begin position="347"/>
        <end position="367"/>
    </location>
</feature>